<evidence type="ECO:0000255" key="1">
    <source>
        <dbReference type="HAMAP-Rule" id="MF_00199"/>
    </source>
</evidence>
<keyword id="KW-0378">Hydrolase</keyword>
<name>APAH_HAEIG</name>
<protein>
    <recommendedName>
        <fullName evidence="1">Bis(5'-nucleosyl)-tetraphosphatase, symmetrical</fullName>
        <ecNumber evidence="1">3.6.1.41</ecNumber>
    </recommendedName>
    <alternativeName>
        <fullName evidence="1">Ap4A hydrolase</fullName>
    </alternativeName>
    <alternativeName>
        <fullName evidence="1">Diadenosine 5',5'''-P1,P4-tetraphosphate pyrophosphohydrolase</fullName>
    </alternativeName>
    <alternativeName>
        <fullName evidence="1">Diadenosine tetraphosphatase</fullName>
    </alternativeName>
</protein>
<dbReference type="EC" id="3.6.1.41" evidence="1"/>
<dbReference type="EMBL" id="CP000672">
    <property type="protein sequence ID" value="ABR00114.1"/>
    <property type="molecule type" value="Genomic_DNA"/>
</dbReference>
<dbReference type="SMR" id="A5UH58"/>
<dbReference type="KEGG" id="hiq:CGSHiGG_06035"/>
<dbReference type="HOGENOM" id="CLU_056184_2_0_6"/>
<dbReference type="Proteomes" id="UP000001990">
    <property type="component" value="Chromosome"/>
</dbReference>
<dbReference type="GO" id="GO:0008803">
    <property type="term" value="F:bis(5'-nucleosyl)-tetraphosphatase (symmetrical) activity"/>
    <property type="evidence" value="ECO:0007669"/>
    <property type="project" value="UniProtKB-UniRule"/>
</dbReference>
<dbReference type="CDD" id="cd07422">
    <property type="entry name" value="MPP_ApaH"/>
    <property type="match status" value="1"/>
</dbReference>
<dbReference type="Gene3D" id="3.60.21.10">
    <property type="match status" value="1"/>
</dbReference>
<dbReference type="HAMAP" id="MF_00199">
    <property type="entry name" value="ApaH"/>
    <property type="match status" value="1"/>
</dbReference>
<dbReference type="InterPro" id="IPR004617">
    <property type="entry name" value="ApaH"/>
</dbReference>
<dbReference type="InterPro" id="IPR004843">
    <property type="entry name" value="Calcineurin-like_PHP_ApaH"/>
</dbReference>
<dbReference type="InterPro" id="IPR029052">
    <property type="entry name" value="Metallo-depent_PP-like"/>
</dbReference>
<dbReference type="NCBIfam" id="TIGR00668">
    <property type="entry name" value="apaH"/>
    <property type="match status" value="1"/>
</dbReference>
<dbReference type="NCBIfam" id="NF001204">
    <property type="entry name" value="PRK00166.1"/>
    <property type="match status" value="1"/>
</dbReference>
<dbReference type="PANTHER" id="PTHR40942">
    <property type="match status" value="1"/>
</dbReference>
<dbReference type="PANTHER" id="PTHR40942:SF4">
    <property type="entry name" value="CYTOCHROME C5"/>
    <property type="match status" value="1"/>
</dbReference>
<dbReference type="Pfam" id="PF00149">
    <property type="entry name" value="Metallophos"/>
    <property type="match status" value="1"/>
</dbReference>
<dbReference type="PIRSF" id="PIRSF000903">
    <property type="entry name" value="B5n-ttraPtase_sm"/>
    <property type="match status" value="1"/>
</dbReference>
<dbReference type="SUPFAM" id="SSF56300">
    <property type="entry name" value="Metallo-dependent phosphatases"/>
    <property type="match status" value="1"/>
</dbReference>
<accession>A5UH58</accession>
<organism>
    <name type="scientific">Haemophilus influenzae (strain PittGG)</name>
    <dbReference type="NCBI Taxonomy" id="374931"/>
    <lineage>
        <taxon>Bacteria</taxon>
        <taxon>Pseudomonadati</taxon>
        <taxon>Pseudomonadota</taxon>
        <taxon>Gammaproteobacteria</taxon>
        <taxon>Pasteurellales</taxon>
        <taxon>Pasteurellaceae</taxon>
        <taxon>Haemophilus</taxon>
    </lineage>
</organism>
<sequence length="275" mass="31844">MATYFVGDLQGCYDELQLLLERVDFNPTQDKLYLVGDLVARGDKSLECLCFVKSLGNAAQTVLGNHDLHLIATALDIKKVKPRDRVDAIFNAPDFDEQIHWLRHQPLLVHSEELNFLMSHAGISPDWDLKTAKSCAAEVEQILQHGDFHYLIENMYSEQPDRWSPDLQGLARHRYIINAFTRMRFCYLDHRFDFACKSPLKDAPAELTPWFNLDNPLYKQIPIVFGHWASLVDEPTPKGIYALDTGCVWNNRMTMLRWEDKQFFTQSAVKNYSDF</sequence>
<proteinExistence type="inferred from homology"/>
<comment type="function">
    <text evidence="1">Hydrolyzes diadenosine 5',5'''-P1,P4-tetraphosphate to yield ADP.</text>
</comment>
<comment type="catalytic activity">
    <reaction evidence="1">
        <text>P(1),P(4)-bis(5'-adenosyl) tetraphosphate + H2O = 2 ADP + 2 H(+)</text>
        <dbReference type="Rhea" id="RHEA:24252"/>
        <dbReference type="ChEBI" id="CHEBI:15377"/>
        <dbReference type="ChEBI" id="CHEBI:15378"/>
        <dbReference type="ChEBI" id="CHEBI:58141"/>
        <dbReference type="ChEBI" id="CHEBI:456216"/>
        <dbReference type="EC" id="3.6.1.41"/>
    </reaction>
</comment>
<comment type="similarity">
    <text evidence="1">Belongs to the Ap4A hydrolase family.</text>
</comment>
<feature type="chain" id="PRO_1000012063" description="Bis(5'-nucleosyl)-tetraphosphatase, symmetrical">
    <location>
        <begin position="1"/>
        <end position="275"/>
    </location>
</feature>
<gene>
    <name evidence="1" type="primary">apaH</name>
    <name type="ordered locus">CGSHiGG_06035</name>
</gene>
<reference key="1">
    <citation type="journal article" date="2007" name="Genome Biol.">
        <title>Characterization and modeling of the Haemophilus influenzae core and supragenomes based on the complete genomic sequences of Rd and 12 clinical nontypeable strains.</title>
        <authorList>
            <person name="Hogg J.S."/>
            <person name="Hu F.Z."/>
            <person name="Janto B."/>
            <person name="Boissy R."/>
            <person name="Hayes J."/>
            <person name="Keefe R."/>
            <person name="Post J.C."/>
            <person name="Ehrlich G.D."/>
        </authorList>
    </citation>
    <scope>NUCLEOTIDE SEQUENCE [LARGE SCALE GENOMIC DNA]</scope>
    <source>
        <strain>PittGG</strain>
    </source>
</reference>